<comment type="subunit">
    <text evidence="1">Part of the 50S ribosomal subunit. Contacts protein L32.</text>
</comment>
<comment type="similarity">
    <text evidence="1">Belongs to the bacterial ribosomal protein bL17 family.</text>
</comment>
<reference key="1">
    <citation type="submission" date="2007-09" db="EMBL/GenBank/DDBJ databases">
        <title>Complete genome sequence of Rickettsia rickettsii.</title>
        <authorList>
            <person name="Madan A."/>
            <person name="Fahey J."/>
            <person name="Helton E."/>
            <person name="Ketteman M."/>
            <person name="Madan A."/>
            <person name="Rodrigues S."/>
            <person name="Sanchez A."/>
            <person name="Dasch G."/>
            <person name="Eremeeva M."/>
        </authorList>
    </citation>
    <scope>NUCLEOTIDE SEQUENCE [LARGE SCALE GENOMIC DNA]</scope>
    <source>
        <strain>Sheila Smith</strain>
    </source>
</reference>
<accession>A8GT44</accession>
<evidence type="ECO:0000255" key="1">
    <source>
        <dbReference type="HAMAP-Rule" id="MF_01368"/>
    </source>
</evidence>
<evidence type="ECO:0000305" key="2"/>
<keyword id="KW-0687">Ribonucleoprotein</keyword>
<keyword id="KW-0689">Ribosomal protein</keyword>
<dbReference type="EMBL" id="CP000848">
    <property type="protein sequence ID" value="ABV76569.1"/>
    <property type="molecule type" value="Genomic_DNA"/>
</dbReference>
<dbReference type="RefSeq" id="WP_004997844.1">
    <property type="nucleotide sequence ID" value="NZ_CP121767.1"/>
</dbReference>
<dbReference type="SMR" id="A8GT44"/>
<dbReference type="GeneID" id="95361461"/>
<dbReference type="KEGG" id="rri:A1G_05430"/>
<dbReference type="HOGENOM" id="CLU_074407_2_0_5"/>
<dbReference type="Proteomes" id="UP000006832">
    <property type="component" value="Chromosome"/>
</dbReference>
<dbReference type="GO" id="GO:0022625">
    <property type="term" value="C:cytosolic large ribosomal subunit"/>
    <property type="evidence" value="ECO:0007669"/>
    <property type="project" value="TreeGrafter"/>
</dbReference>
<dbReference type="GO" id="GO:0003735">
    <property type="term" value="F:structural constituent of ribosome"/>
    <property type="evidence" value="ECO:0007669"/>
    <property type="project" value="InterPro"/>
</dbReference>
<dbReference type="GO" id="GO:0006412">
    <property type="term" value="P:translation"/>
    <property type="evidence" value="ECO:0007669"/>
    <property type="project" value="UniProtKB-UniRule"/>
</dbReference>
<dbReference type="FunFam" id="3.90.1030.10:FF:000001">
    <property type="entry name" value="50S ribosomal protein L17"/>
    <property type="match status" value="1"/>
</dbReference>
<dbReference type="Gene3D" id="3.90.1030.10">
    <property type="entry name" value="Ribosomal protein L17"/>
    <property type="match status" value="1"/>
</dbReference>
<dbReference type="HAMAP" id="MF_01368">
    <property type="entry name" value="Ribosomal_bL17"/>
    <property type="match status" value="1"/>
</dbReference>
<dbReference type="InterPro" id="IPR000456">
    <property type="entry name" value="Ribosomal_bL17"/>
</dbReference>
<dbReference type="InterPro" id="IPR047859">
    <property type="entry name" value="Ribosomal_bL17_CS"/>
</dbReference>
<dbReference type="InterPro" id="IPR036373">
    <property type="entry name" value="Ribosomal_bL17_sf"/>
</dbReference>
<dbReference type="NCBIfam" id="TIGR00059">
    <property type="entry name" value="L17"/>
    <property type="match status" value="1"/>
</dbReference>
<dbReference type="PANTHER" id="PTHR14413:SF16">
    <property type="entry name" value="LARGE RIBOSOMAL SUBUNIT PROTEIN BL17M"/>
    <property type="match status" value="1"/>
</dbReference>
<dbReference type="PANTHER" id="PTHR14413">
    <property type="entry name" value="RIBOSOMAL PROTEIN L17"/>
    <property type="match status" value="1"/>
</dbReference>
<dbReference type="Pfam" id="PF01196">
    <property type="entry name" value="Ribosomal_L17"/>
    <property type="match status" value="1"/>
</dbReference>
<dbReference type="SUPFAM" id="SSF64263">
    <property type="entry name" value="Prokaryotic ribosomal protein L17"/>
    <property type="match status" value="1"/>
</dbReference>
<dbReference type="PROSITE" id="PS01167">
    <property type="entry name" value="RIBOSOMAL_L17"/>
    <property type="match status" value="1"/>
</dbReference>
<proteinExistence type="inferred from homology"/>
<feature type="chain" id="PRO_1000055932" description="Large ribosomal subunit protein bL17">
    <location>
        <begin position="1"/>
        <end position="136"/>
    </location>
</feature>
<protein>
    <recommendedName>
        <fullName evidence="1">Large ribosomal subunit protein bL17</fullName>
    </recommendedName>
    <alternativeName>
        <fullName evidence="2">50S ribosomal protein L17</fullName>
    </alternativeName>
</protein>
<name>RL17_RICRS</name>
<organism>
    <name type="scientific">Rickettsia rickettsii (strain Sheila Smith)</name>
    <dbReference type="NCBI Taxonomy" id="392021"/>
    <lineage>
        <taxon>Bacteria</taxon>
        <taxon>Pseudomonadati</taxon>
        <taxon>Pseudomonadota</taxon>
        <taxon>Alphaproteobacteria</taxon>
        <taxon>Rickettsiales</taxon>
        <taxon>Rickettsiaceae</taxon>
        <taxon>Rickettsieae</taxon>
        <taxon>Rickettsia</taxon>
        <taxon>spotted fever group</taxon>
    </lineage>
</organism>
<gene>
    <name evidence="1" type="primary">rplQ</name>
    <name type="ordered locus">A1G_05430</name>
</gene>
<sequence>MRHKIKGRKLNVTSSHRQAMLANMAVALVTHEQIKTTLPKAKELRPYIETLITKAKKADLMVRRSVLSKIKDKTAVEKLINILGTRYKDRPGGYTRIIKAGFRYGDLAPIAYIEFVDRDINAKGNIQQDANEEIKN</sequence>